<name>HUNK_HUMAN</name>
<organism>
    <name type="scientific">Homo sapiens</name>
    <name type="common">Human</name>
    <dbReference type="NCBI Taxonomy" id="9606"/>
    <lineage>
        <taxon>Eukaryota</taxon>
        <taxon>Metazoa</taxon>
        <taxon>Chordata</taxon>
        <taxon>Craniata</taxon>
        <taxon>Vertebrata</taxon>
        <taxon>Euteleostomi</taxon>
        <taxon>Mammalia</taxon>
        <taxon>Eutheria</taxon>
        <taxon>Euarchontoglires</taxon>
        <taxon>Primates</taxon>
        <taxon>Haplorrhini</taxon>
        <taxon>Catarrhini</taxon>
        <taxon>Hominidae</taxon>
        <taxon>Homo</taxon>
    </lineage>
</organism>
<accession>P57058</accession>
<gene>
    <name type="primary">HUNK</name>
    <name type="synonym">MAKV</name>
</gene>
<sequence>MPAAAGDGLLGEPAAPGGGGGAEDAARPAAACEGSFLPAWVSGVPRERLRDFQHHKRVGNYLIGSRKLGEGSFAKVREGLHVLTGEKVAIKVIDKKRAKKDTYVTKNLRREGQIQQMIRHPNITQLLDILETENSYYLVMELCPGGNLMHKIYEKKRLEESEARRYIRQLISAVEHLHRAGVVHRDLKIENLLLDEDNNIKLIDFGLSNCAGILGYSDPFSTQCGSPAYAAPELLARKKYGPKIDVWSIGVNMYAMLTGTLPFTVEPFSLRALYQKMVDKEMNPLPTQLSTGAISFLRSLLEPDPVKRPNIQQALANRWLNENYTGKVPCNVTYPNRISLEDLSPSVVLHMTEKLGYKNSDVINTVLSNRACHILAIYFLLNKKLERYLSGKSDIQDSLCYKTRLYQIEKYRAPKESYEASLDTWTRDLEFHAVQDKKPKEQEKRGDFLHRPFSKKLDKNLPSHKQPSGSLMTQIQNTKALLKDRKASKSSFPDKDSFGCRNIFRKTSDSNCVASSSMEFIPVPPPRTPRIVKKPEPHQPGPGSTGIPHKEDPLMLDMVRSFESVDRDDHVEVLSPSHHYRILNSPVSLARRNSSERTLSPGLPSGSMSPLHTPLHPTLVSFAHEDKNSPPKEEGLCCPPPVPSNGPMQPLGSPNCVKSRGRFPMMGIGQMLRKRHQSLQPSADRPLEASLPPLQPLAPVNLAFDMADGVKTQC</sequence>
<proteinExistence type="evidence at protein level"/>
<comment type="catalytic activity">
    <reaction>
        <text>L-seryl-[protein] + ATP = O-phospho-L-seryl-[protein] + ADP + H(+)</text>
        <dbReference type="Rhea" id="RHEA:17989"/>
        <dbReference type="Rhea" id="RHEA-COMP:9863"/>
        <dbReference type="Rhea" id="RHEA-COMP:11604"/>
        <dbReference type="ChEBI" id="CHEBI:15378"/>
        <dbReference type="ChEBI" id="CHEBI:29999"/>
        <dbReference type="ChEBI" id="CHEBI:30616"/>
        <dbReference type="ChEBI" id="CHEBI:83421"/>
        <dbReference type="ChEBI" id="CHEBI:456216"/>
        <dbReference type="EC" id="2.7.11.1"/>
    </reaction>
</comment>
<comment type="catalytic activity">
    <reaction>
        <text>L-threonyl-[protein] + ATP = O-phospho-L-threonyl-[protein] + ADP + H(+)</text>
        <dbReference type="Rhea" id="RHEA:46608"/>
        <dbReference type="Rhea" id="RHEA-COMP:11060"/>
        <dbReference type="Rhea" id="RHEA-COMP:11605"/>
        <dbReference type="ChEBI" id="CHEBI:15378"/>
        <dbReference type="ChEBI" id="CHEBI:30013"/>
        <dbReference type="ChEBI" id="CHEBI:30616"/>
        <dbReference type="ChEBI" id="CHEBI:61977"/>
        <dbReference type="ChEBI" id="CHEBI:456216"/>
        <dbReference type="EC" id="2.7.11.1"/>
    </reaction>
</comment>
<comment type="interaction">
    <interactant intactId="EBI-3959804">
        <id>P57058</id>
    </interactant>
    <interactant intactId="EBI-352733">
        <id>P23528</id>
        <label>CFL1</label>
    </interactant>
    <organismsDiffer>false</organismsDiffer>
    <experiments>2</experiments>
</comment>
<comment type="interaction">
    <interactant intactId="EBI-3959804">
        <id>P57058</id>
    </interactant>
    <interactant intactId="EBI-444403">
        <id>P53667</id>
        <label>LIMK1</label>
    </interactant>
    <organismsDiffer>false</organismsDiffer>
    <experiments>2</experiments>
</comment>
<comment type="similarity">
    <text evidence="5">Belongs to the protein kinase superfamily. CAMK Ser/Thr protein kinase family. SNF1 subfamily.</text>
</comment>
<protein>
    <recommendedName>
        <fullName>Hormonally up-regulated neu tumor-associated kinase</fullName>
        <ecNumber>2.7.11.1</ecNumber>
    </recommendedName>
    <alternativeName>
        <fullName>B19</fullName>
    </alternativeName>
    <alternativeName>
        <fullName>Serine/threonine-protein kinase MAK-V</fullName>
    </alternativeName>
</protein>
<feature type="chain" id="PRO_0000086004" description="Hormonally up-regulated neu tumor-associated kinase">
    <location>
        <begin position="1"/>
        <end position="714"/>
    </location>
</feature>
<feature type="domain" description="Protein kinase" evidence="1">
    <location>
        <begin position="62"/>
        <end position="320"/>
    </location>
</feature>
<feature type="region of interest" description="Disordered" evidence="3">
    <location>
        <begin position="1"/>
        <end position="26"/>
    </location>
</feature>
<feature type="region of interest" description="Disordered" evidence="3">
    <location>
        <begin position="437"/>
        <end position="471"/>
    </location>
</feature>
<feature type="region of interest" description="Disordered" evidence="3">
    <location>
        <begin position="518"/>
        <end position="552"/>
    </location>
</feature>
<feature type="region of interest" description="Disordered" evidence="3">
    <location>
        <begin position="590"/>
        <end position="615"/>
    </location>
</feature>
<feature type="compositionally biased region" description="Low complexity" evidence="3">
    <location>
        <begin position="1"/>
        <end position="15"/>
    </location>
</feature>
<feature type="compositionally biased region" description="Basic and acidic residues" evidence="3">
    <location>
        <begin position="437"/>
        <end position="461"/>
    </location>
</feature>
<feature type="compositionally biased region" description="Low complexity" evidence="3">
    <location>
        <begin position="599"/>
        <end position="611"/>
    </location>
</feature>
<feature type="active site" description="Proton acceptor" evidence="1 2">
    <location>
        <position position="186"/>
    </location>
</feature>
<feature type="binding site" evidence="1">
    <location>
        <begin position="68"/>
        <end position="76"/>
    </location>
    <ligand>
        <name>ATP</name>
        <dbReference type="ChEBI" id="CHEBI:30616"/>
    </ligand>
</feature>
<feature type="binding site" evidence="1">
    <location>
        <position position="91"/>
    </location>
    <ligand>
        <name>ATP</name>
        <dbReference type="ChEBI" id="CHEBI:30616"/>
    </ligand>
</feature>
<feature type="sequence variant" id="VAR_040561" description="In dbSNP:rs35133981." evidence="4">
    <original>R</original>
    <variation>W</variation>
    <location>
        <position position="157"/>
    </location>
</feature>
<feature type="sequence variant" id="VAR_040562" description="In dbSNP:rs10775648." evidence="4">
    <original>R</original>
    <variation>C</variation>
    <location>
        <position position="591"/>
    </location>
</feature>
<feature type="sequence variant" id="VAR_040563" description="In dbSNP:rs56021554." evidence="4">
    <original>E</original>
    <variation>K</variation>
    <location>
        <position position="625"/>
    </location>
</feature>
<feature type="sequence variant" id="VAR_040564" description="In dbSNP:rs56240027." evidence="4">
    <original>M</original>
    <variation>T</variation>
    <location>
        <position position="648"/>
    </location>
</feature>
<keyword id="KW-0067">ATP-binding</keyword>
<keyword id="KW-0418">Kinase</keyword>
<keyword id="KW-0547">Nucleotide-binding</keyword>
<keyword id="KW-1267">Proteomics identification</keyword>
<keyword id="KW-1185">Reference proteome</keyword>
<keyword id="KW-0723">Serine/threonine-protein kinase</keyword>
<keyword id="KW-0808">Transferase</keyword>
<evidence type="ECO:0000255" key="1">
    <source>
        <dbReference type="PROSITE-ProRule" id="PRU00159"/>
    </source>
</evidence>
<evidence type="ECO:0000255" key="2">
    <source>
        <dbReference type="PROSITE-ProRule" id="PRU10027"/>
    </source>
</evidence>
<evidence type="ECO:0000256" key="3">
    <source>
        <dbReference type="SAM" id="MobiDB-lite"/>
    </source>
</evidence>
<evidence type="ECO:0000269" key="4">
    <source>
    </source>
</evidence>
<evidence type="ECO:0000305" key="5"/>
<reference key="1">
    <citation type="submission" date="2000-01" db="EMBL/GenBank/DDBJ databases">
        <title>A putative serine/threonine protein kinase MAK-V on human chromosome 21q22.1.</title>
        <authorList>
            <person name="Scott H.S."/>
            <person name="Antonarakis S.E."/>
            <person name="Papasavvas M.P."/>
            <person name="Michaud J."/>
        </authorList>
    </citation>
    <scope>NUCLEOTIDE SEQUENCE [MRNA]</scope>
</reference>
<reference key="2">
    <citation type="journal article" date="2007" name="Nature">
        <title>Patterns of somatic mutation in human cancer genomes.</title>
        <authorList>
            <person name="Greenman C."/>
            <person name="Stephens P."/>
            <person name="Smith R."/>
            <person name="Dalgliesh G.L."/>
            <person name="Hunter C."/>
            <person name="Bignell G."/>
            <person name="Davies H."/>
            <person name="Teague J."/>
            <person name="Butler A."/>
            <person name="Stevens C."/>
            <person name="Edkins S."/>
            <person name="O'Meara S."/>
            <person name="Vastrik I."/>
            <person name="Schmidt E.E."/>
            <person name="Avis T."/>
            <person name="Barthorpe S."/>
            <person name="Bhamra G."/>
            <person name="Buck G."/>
            <person name="Choudhury B."/>
            <person name="Clements J."/>
            <person name="Cole J."/>
            <person name="Dicks E."/>
            <person name="Forbes S."/>
            <person name="Gray K."/>
            <person name="Halliday K."/>
            <person name="Harrison R."/>
            <person name="Hills K."/>
            <person name="Hinton J."/>
            <person name="Jenkinson A."/>
            <person name="Jones D."/>
            <person name="Menzies A."/>
            <person name="Mironenko T."/>
            <person name="Perry J."/>
            <person name="Raine K."/>
            <person name="Richardson D."/>
            <person name="Shepherd R."/>
            <person name="Small A."/>
            <person name="Tofts C."/>
            <person name="Varian J."/>
            <person name="Webb T."/>
            <person name="West S."/>
            <person name="Widaa S."/>
            <person name="Yates A."/>
            <person name="Cahill D.P."/>
            <person name="Louis D.N."/>
            <person name="Goldstraw P."/>
            <person name="Nicholson A.G."/>
            <person name="Brasseur F."/>
            <person name="Looijenga L."/>
            <person name="Weber B.L."/>
            <person name="Chiew Y.-E."/>
            <person name="DeFazio A."/>
            <person name="Greaves M.F."/>
            <person name="Green A.R."/>
            <person name="Campbell P."/>
            <person name="Birney E."/>
            <person name="Easton D.F."/>
            <person name="Chenevix-Trench G."/>
            <person name="Tan M.-H."/>
            <person name="Khoo S.K."/>
            <person name="Teh B.T."/>
            <person name="Yuen S.T."/>
            <person name="Leung S.Y."/>
            <person name="Wooster R."/>
            <person name="Futreal P.A."/>
            <person name="Stratton M.R."/>
        </authorList>
    </citation>
    <scope>VARIANTS [LARGE SCALE ANALYSIS] TRP-157; CYS-591; LYS-625 AND THR-648</scope>
</reference>
<dbReference type="EC" id="2.7.11.1"/>
<dbReference type="EMBL" id="AJ271722">
    <property type="protein sequence ID" value="CAB71146.1"/>
    <property type="molecule type" value="mRNA"/>
</dbReference>
<dbReference type="CCDS" id="CCDS13610.1"/>
<dbReference type="RefSeq" id="NP_055401.1">
    <property type="nucleotide sequence ID" value="NM_014586.2"/>
</dbReference>
<dbReference type="SMR" id="P57058"/>
<dbReference type="BioGRID" id="119035">
    <property type="interactions" value="133"/>
</dbReference>
<dbReference type="DIP" id="DIP-58064N"/>
<dbReference type="FunCoup" id="P57058">
    <property type="interactions" value="877"/>
</dbReference>
<dbReference type="IntAct" id="P57058">
    <property type="interactions" value="105"/>
</dbReference>
<dbReference type="MINT" id="P57058"/>
<dbReference type="STRING" id="9606.ENSP00000270112"/>
<dbReference type="BindingDB" id="P57058"/>
<dbReference type="ChEMBL" id="CHEMBL1795165"/>
<dbReference type="DrugCentral" id="P57058"/>
<dbReference type="iPTMnet" id="P57058"/>
<dbReference type="PhosphoSitePlus" id="P57058"/>
<dbReference type="BioMuta" id="HUNK"/>
<dbReference type="DMDM" id="9973393"/>
<dbReference type="jPOST" id="P57058"/>
<dbReference type="MassIVE" id="P57058"/>
<dbReference type="PaxDb" id="9606-ENSP00000270112"/>
<dbReference type="PeptideAtlas" id="P57058"/>
<dbReference type="ProteomicsDB" id="56977"/>
<dbReference type="TopDownProteomics" id="P57058"/>
<dbReference type="Antibodypedia" id="6820">
    <property type="antibodies" value="352 antibodies from 31 providers"/>
</dbReference>
<dbReference type="DNASU" id="30811"/>
<dbReference type="Ensembl" id="ENST00000270112.7">
    <property type="protein sequence ID" value="ENSP00000270112.2"/>
    <property type="gene ID" value="ENSG00000142149.9"/>
</dbReference>
<dbReference type="GeneID" id="30811"/>
<dbReference type="KEGG" id="hsa:30811"/>
<dbReference type="MANE-Select" id="ENST00000270112.7">
    <property type="protein sequence ID" value="ENSP00000270112.2"/>
    <property type="RefSeq nucleotide sequence ID" value="NM_014586.2"/>
    <property type="RefSeq protein sequence ID" value="NP_055401.1"/>
</dbReference>
<dbReference type="UCSC" id="uc002yph.3">
    <property type="organism name" value="human"/>
</dbReference>
<dbReference type="AGR" id="HGNC:13326"/>
<dbReference type="CTD" id="30811"/>
<dbReference type="DisGeNET" id="30811"/>
<dbReference type="GeneCards" id="HUNK"/>
<dbReference type="HGNC" id="HGNC:13326">
    <property type="gene designation" value="HUNK"/>
</dbReference>
<dbReference type="HPA" id="ENSG00000142149">
    <property type="expression patterns" value="Tissue enhanced (pancreas)"/>
</dbReference>
<dbReference type="MIM" id="606532">
    <property type="type" value="gene"/>
</dbReference>
<dbReference type="neXtProt" id="NX_P57058"/>
<dbReference type="OpenTargets" id="ENSG00000142149"/>
<dbReference type="PharmGKB" id="PA29563"/>
<dbReference type="VEuPathDB" id="HostDB:ENSG00000142149"/>
<dbReference type="eggNOG" id="KOG0583">
    <property type="taxonomic scope" value="Eukaryota"/>
</dbReference>
<dbReference type="GeneTree" id="ENSGT00940000161070"/>
<dbReference type="HOGENOM" id="CLU_017161_0_0_1"/>
<dbReference type="InParanoid" id="P57058"/>
<dbReference type="OMA" id="HQYRMLS"/>
<dbReference type="OrthoDB" id="193931at2759"/>
<dbReference type="PAN-GO" id="P57058">
    <property type="GO annotations" value="3 GO annotations based on evolutionary models"/>
</dbReference>
<dbReference type="PhylomeDB" id="P57058"/>
<dbReference type="TreeFam" id="TF352373"/>
<dbReference type="PathwayCommons" id="P57058"/>
<dbReference type="SignaLink" id="P57058"/>
<dbReference type="SIGNOR" id="P57058"/>
<dbReference type="BioGRID-ORCS" id="30811">
    <property type="hits" value="10 hits in 1178 CRISPR screens"/>
</dbReference>
<dbReference type="CD-CODE" id="8C2F96ED">
    <property type="entry name" value="Centrosome"/>
</dbReference>
<dbReference type="ChiTaRS" id="HUNK">
    <property type="organism name" value="human"/>
</dbReference>
<dbReference type="GenomeRNAi" id="30811"/>
<dbReference type="Pharos" id="P57058">
    <property type="development level" value="Tchem"/>
</dbReference>
<dbReference type="PRO" id="PR:P57058"/>
<dbReference type="Proteomes" id="UP000005640">
    <property type="component" value="Chromosome 21"/>
</dbReference>
<dbReference type="RNAct" id="P57058">
    <property type="molecule type" value="protein"/>
</dbReference>
<dbReference type="Bgee" id="ENSG00000142149">
    <property type="expression patterns" value="Expressed in ganglionic eminence and 137 other cell types or tissues"/>
</dbReference>
<dbReference type="ExpressionAtlas" id="P57058">
    <property type="expression patterns" value="baseline and differential"/>
</dbReference>
<dbReference type="GO" id="GO:0005737">
    <property type="term" value="C:cytoplasm"/>
    <property type="evidence" value="ECO:0000318"/>
    <property type="project" value="GO_Central"/>
</dbReference>
<dbReference type="GO" id="GO:0005524">
    <property type="term" value="F:ATP binding"/>
    <property type="evidence" value="ECO:0007669"/>
    <property type="project" value="UniProtKB-KW"/>
</dbReference>
<dbReference type="GO" id="GO:0106310">
    <property type="term" value="F:protein serine kinase activity"/>
    <property type="evidence" value="ECO:0007669"/>
    <property type="project" value="RHEA"/>
</dbReference>
<dbReference type="GO" id="GO:0004674">
    <property type="term" value="F:protein serine/threonine kinase activity"/>
    <property type="evidence" value="ECO:0000318"/>
    <property type="project" value="GO_Central"/>
</dbReference>
<dbReference type="GO" id="GO:0035556">
    <property type="term" value="P:intracellular signal transduction"/>
    <property type="evidence" value="ECO:0000318"/>
    <property type="project" value="GO_Central"/>
</dbReference>
<dbReference type="GO" id="GO:0007165">
    <property type="term" value="P:signal transduction"/>
    <property type="evidence" value="ECO:0000304"/>
    <property type="project" value="ProtInc"/>
</dbReference>
<dbReference type="CDD" id="cd14070">
    <property type="entry name" value="STKc_HUNK"/>
    <property type="match status" value="1"/>
</dbReference>
<dbReference type="FunFam" id="1.10.510.10:FF:000391">
    <property type="entry name" value="Hormonally up-regulated neu tumor-associated kinase"/>
    <property type="match status" value="1"/>
</dbReference>
<dbReference type="FunFam" id="3.30.200.20:FF:000003">
    <property type="entry name" value="Non-specific serine/threonine protein kinase"/>
    <property type="match status" value="1"/>
</dbReference>
<dbReference type="Gene3D" id="1.10.510.10">
    <property type="entry name" value="Transferase(Phosphotransferase) domain 1"/>
    <property type="match status" value="1"/>
</dbReference>
<dbReference type="InterPro" id="IPR034671">
    <property type="entry name" value="Hunk"/>
</dbReference>
<dbReference type="InterPro" id="IPR011009">
    <property type="entry name" value="Kinase-like_dom_sf"/>
</dbReference>
<dbReference type="InterPro" id="IPR000719">
    <property type="entry name" value="Prot_kinase_dom"/>
</dbReference>
<dbReference type="InterPro" id="IPR017441">
    <property type="entry name" value="Protein_kinase_ATP_BS"/>
</dbReference>
<dbReference type="InterPro" id="IPR008271">
    <property type="entry name" value="Ser/Thr_kinase_AS"/>
</dbReference>
<dbReference type="PANTHER" id="PTHR24346:SF80">
    <property type="entry name" value="HORMONALLY UP-REGULATED NEU TUMOR-ASSOCIATED KINASE"/>
    <property type="match status" value="1"/>
</dbReference>
<dbReference type="PANTHER" id="PTHR24346">
    <property type="entry name" value="MAP/MICROTUBULE AFFINITY-REGULATING KINASE"/>
    <property type="match status" value="1"/>
</dbReference>
<dbReference type="Pfam" id="PF00069">
    <property type="entry name" value="Pkinase"/>
    <property type="match status" value="1"/>
</dbReference>
<dbReference type="SMART" id="SM00220">
    <property type="entry name" value="S_TKc"/>
    <property type="match status" value="1"/>
</dbReference>
<dbReference type="SUPFAM" id="SSF56112">
    <property type="entry name" value="Protein kinase-like (PK-like)"/>
    <property type="match status" value="1"/>
</dbReference>
<dbReference type="PROSITE" id="PS00107">
    <property type="entry name" value="PROTEIN_KINASE_ATP"/>
    <property type="match status" value="1"/>
</dbReference>
<dbReference type="PROSITE" id="PS50011">
    <property type="entry name" value="PROTEIN_KINASE_DOM"/>
    <property type="match status" value="1"/>
</dbReference>
<dbReference type="PROSITE" id="PS00108">
    <property type="entry name" value="PROTEIN_KINASE_ST"/>
    <property type="match status" value="1"/>
</dbReference>